<organism>
    <name type="scientific">Rippkaea orientalis (strain PCC 8801 / RF-1)</name>
    <name type="common">Cyanothece sp. (strain PCC 8801)</name>
    <dbReference type="NCBI Taxonomy" id="41431"/>
    <lineage>
        <taxon>Bacteria</taxon>
        <taxon>Bacillati</taxon>
        <taxon>Cyanobacteriota</taxon>
        <taxon>Cyanophyceae</taxon>
        <taxon>Oscillatoriophycideae</taxon>
        <taxon>Chroococcales</taxon>
        <taxon>Aphanothecaceae</taxon>
        <taxon>Rippkaea</taxon>
        <taxon>Rippkaea orientalis</taxon>
    </lineage>
</organism>
<proteinExistence type="inferred from homology"/>
<dbReference type="EC" id="2.5.1.75" evidence="1"/>
<dbReference type="EMBL" id="CP001287">
    <property type="protein sequence ID" value="ACK68065.1"/>
    <property type="molecule type" value="Genomic_DNA"/>
</dbReference>
<dbReference type="RefSeq" id="WP_015957294.1">
    <property type="nucleotide sequence ID" value="NC_011726.1"/>
</dbReference>
<dbReference type="SMR" id="B7K612"/>
<dbReference type="STRING" id="41431.PCC8801_4133"/>
<dbReference type="KEGG" id="cyp:PCC8801_4133"/>
<dbReference type="eggNOG" id="COG0324">
    <property type="taxonomic scope" value="Bacteria"/>
</dbReference>
<dbReference type="HOGENOM" id="CLU_032616_0_1_3"/>
<dbReference type="OrthoDB" id="9776390at2"/>
<dbReference type="Proteomes" id="UP000008204">
    <property type="component" value="Chromosome"/>
</dbReference>
<dbReference type="GO" id="GO:0005524">
    <property type="term" value="F:ATP binding"/>
    <property type="evidence" value="ECO:0007669"/>
    <property type="project" value="UniProtKB-UniRule"/>
</dbReference>
<dbReference type="GO" id="GO:0052381">
    <property type="term" value="F:tRNA dimethylallyltransferase activity"/>
    <property type="evidence" value="ECO:0007669"/>
    <property type="project" value="UniProtKB-UniRule"/>
</dbReference>
<dbReference type="GO" id="GO:0006400">
    <property type="term" value="P:tRNA modification"/>
    <property type="evidence" value="ECO:0007669"/>
    <property type="project" value="TreeGrafter"/>
</dbReference>
<dbReference type="Gene3D" id="1.10.20.140">
    <property type="match status" value="1"/>
</dbReference>
<dbReference type="Gene3D" id="3.40.50.300">
    <property type="entry name" value="P-loop containing nucleotide triphosphate hydrolases"/>
    <property type="match status" value="1"/>
</dbReference>
<dbReference type="HAMAP" id="MF_00185">
    <property type="entry name" value="IPP_trans"/>
    <property type="match status" value="1"/>
</dbReference>
<dbReference type="InterPro" id="IPR039657">
    <property type="entry name" value="Dimethylallyltransferase"/>
</dbReference>
<dbReference type="InterPro" id="IPR018022">
    <property type="entry name" value="IPT"/>
</dbReference>
<dbReference type="InterPro" id="IPR027417">
    <property type="entry name" value="P-loop_NTPase"/>
</dbReference>
<dbReference type="NCBIfam" id="TIGR00174">
    <property type="entry name" value="miaA"/>
    <property type="match status" value="1"/>
</dbReference>
<dbReference type="PANTHER" id="PTHR11088">
    <property type="entry name" value="TRNA DIMETHYLALLYLTRANSFERASE"/>
    <property type="match status" value="1"/>
</dbReference>
<dbReference type="PANTHER" id="PTHR11088:SF60">
    <property type="entry name" value="TRNA DIMETHYLALLYLTRANSFERASE"/>
    <property type="match status" value="1"/>
</dbReference>
<dbReference type="Pfam" id="PF01715">
    <property type="entry name" value="IPPT"/>
    <property type="match status" value="1"/>
</dbReference>
<dbReference type="SUPFAM" id="SSF52540">
    <property type="entry name" value="P-loop containing nucleoside triphosphate hydrolases"/>
    <property type="match status" value="2"/>
</dbReference>
<feature type="chain" id="PRO_0000377135" description="tRNA dimethylallyltransferase">
    <location>
        <begin position="1"/>
        <end position="299"/>
    </location>
</feature>
<feature type="region of interest" description="Interaction with substrate tRNA" evidence="1">
    <location>
        <begin position="35"/>
        <end position="38"/>
    </location>
</feature>
<feature type="binding site" evidence="1">
    <location>
        <begin position="10"/>
        <end position="17"/>
    </location>
    <ligand>
        <name>ATP</name>
        <dbReference type="ChEBI" id="CHEBI:30616"/>
    </ligand>
</feature>
<feature type="binding site" evidence="1">
    <location>
        <begin position="12"/>
        <end position="17"/>
    </location>
    <ligand>
        <name>substrate</name>
    </ligand>
</feature>
<feature type="site" description="Interaction with substrate tRNA" evidence="1">
    <location>
        <position position="100"/>
    </location>
</feature>
<evidence type="ECO:0000255" key="1">
    <source>
        <dbReference type="HAMAP-Rule" id="MF_00185"/>
    </source>
</evidence>
<accession>B7K612</accession>
<protein>
    <recommendedName>
        <fullName evidence="1">tRNA dimethylallyltransferase</fullName>
        <ecNumber evidence="1">2.5.1.75</ecNumber>
    </recommendedName>
    <alternativeName>
        <fullName evidence="1">Dimethylallyl diphosphate:tRNA dimethylallyltransferase</fullName>
        <shortName evidence="1">DMAPP:tRNA dimethylallyltransferase</shortName>
        <shortName evidence="1">DMATase</shortName>
    </alternativeName>
    <alternativeName>
        <fullName evidence="1">Isopentenyl-diphosphate:tRNA isopentenyltransferase</fullName>
        <shortName evidence="1">IPP transferase</shortName>
        <shortName evidence="1">IPPT</shortName>
        <shortName evidence="1">IPTase</shortName>
    </alternativeName>
</protein>
<reference key="1">
    <citation type="journal article" date="2011" name="MBio">
        <title>Novel metabolic attributes of the genus Cyanothece, comprising a group of unicellular nitrogen-fixing Cyanobacteria.</title>
        <authorList>
            <person name="Bandyopadhyay A."/>
            <person name="Elvitigala T."/>
            <person name="Welsh E."/>
            <person name="Stockel J."/>
            <person name="Liberton M."/>
            <person name="Min H."/>
            <person name="Sherman L.A."/>
            <person name="Pakrasi H.B."/>
        </authorList>
    </citation>
    <scope>NUCLEOTIDE SEQUENCE [LARGE SCALE GENOMIC DNA]</scope>
    <source>
        <strain>PCC 8801 / RF-1</strain>
    </source>
</reference>
<gene>
    <name evidence="1" type="primary">miaA</name>
    <name type="ordered locus">PCC8801_4133</name>
</gene>
<keyword id="KW-0067">ATP-binding</keyword>
<keyword id="KW-0460">Magnesium</keyword>
<keyword id="KW-0547">Nucleotide-binding</keyword>
<keyword id="KW-1185">Reference proteome</keyword>
<keyword id="KW-0808">Transferase</keyword>
<keyword id="KW-0819">tRNA processing</keyword>
<sequence>MNTPLIVICGATATGKSGLALTLAQRLDSIIISADSRQVYREFDIGTAKPTHAEQDLVPHYLIDICSPTQTFTVADYQDKVTKLLQSTPCLSPSLLVGGTGLYIKSIVRGLKIPRVAPQPQLRQELEALGQAQCYAMLNQVDSLGAHKIHPHDQVRTLRALEVFYVTGVPISQQQGEYPPTYPILQIGLDSTPDALEKRIEQRTQMMLTMGLVKEVETLMEKYGSDLPLLNTLGYAEIKEYLQGKMSLDQAKAAIILHTRQFAKRQRTWFRSYREIQWFDPTSVNFLDNVWMTIQQFLA</sequence>
<name>MIAA_RIPO1</name>
<comment type="function">
    <text evidence="1">Catalyzes the transfer of a dimethylallyl group onto the adenine at position 37 in tRNAs that read codons beginning with uridine, leading to the formation of N6-(dimethylallyl)adenosine (i(6)A).</text>
</comment>
<comment type="catalytic activity">
    <reaction evidence="1">
        <text>adenosine(37) in tRNA + dimethylallyl diphosphate = N(6)-dimethylallyladenosine(37) in tRNA + diphosphate</text>
        <dbReference type="Rhea" id="RHEA:26482"/>
        <dbReference type="Rhea" id="RHEA-COMP:10162"/>
        <dbReference type="Rhea" id="RHEA-COMP:10375"/>
        <dbReference type="ChEBI" id="CHEBI:33019"/>
        <dbReference type="ChEBI" id="CHEBI:57623"/>
        <dbReference type="ChEBI" id="CHEBI:74411"/>
        <dbReference type="ChEBI" id="CHEBI:74415"/>
        <dbReference type="EC" id="2.5.1.75"/>
    </reaction>
</comment>
<comment type="cofactor">
    <cofactor evidence="1">
        <name>Mg(2+)</name>
        <dbReference type="ChEBI" id="CHEBI:18420"/>
    </cofactor>
</comment>
<comment type="subunit">
    <text evidence="1">Monomer.</text>
</comment>
<comment type="similarity">
    <text evidence="1">Belongs to the IPP transferase family.</text>
</comment>